<sequence length="160" mass="17630">MSTLKKPNLSDPKLRAKLSKGMGHNYYGEPAWPNDLLYIFPVVILGTIACVVGLAVLDPAFLGDKANPFATPLEILPEWYLYPVFQILRVVPNKLLGIALQTLIPLGLILIPFIENVNKFSNPFRRPVAMAFFLFGTALTIYLGIGACLPIDKSLTLGLF</sequence>
<organism>
    <name type="scientific">Prochlorococcus marinus (strain SARG / CCMP1375 / SS120)</name>
    <dbReference type="NCBI Taxonomy" id="167539"/>
    <lineage>
        <taxon>Bacteria</taxon>
        <taxon>Bacillati</taxon>
        <taxon>Cyanobacteriota</taxon>
        <taxon>Cyanophyceae</taxon>
        <taxon>Synechococcales</taxon>
        <taxon>Prochlorococcaceae</taxon>
        <taxon>Prochlorococcus</taxon>
    </lineage>
</organism>
<protein>
    <recommendedName>
        <fullName evidence="1">Cytochrome b6-f complex subunit 4</fullName>
    </recommendedName>
    <alternativeName>
        <fullName evidence="1">17 kDa polypeptide</fullName>
    </alternativeName>
</protein>
<dbReference type="EMBL" id="AE017126">
    <property type="protein sequence ID" value="AAP99414.1"/>
    <property type="molecule type" value="Genomic_DNA"/>
</dbReference>
<dbReference type="RefSeq" id="NP_874762.1">
    <property type="nucleotide sequence ID" value="NC_005042.1"/>
</dbReference>
<dbReference type="RefSeq" id="WP_011124523.1">
    <property type="nucleotide sequence ID" value="NC_005042.1"/>
</dbReference>
<dbReference type="SMR" id="Q7VDK8"/>
<dbReference type="STRING" id="167539.Pro_0368"/>
<dbReference type="EnsemblBacteria" id="AAP99414">
    <property type="protein sequence ID" value="AAP99414"/>
    <property type="gene ID" value="Pro_0368"/>
</dbReference>
<dbReference type="KEGG" id="pma:Pro_0368"/>
<dbReference type="PATRIC" id="fig|167539.5.peg.376"/>
<dbReference type="eggNOG" id="COG1290">
    <property type="taxonomic scope" value="Bacteria"/>
</dbReference>
<dbReference type="HOGENOM" id="CLU_112652_0_0_3"/>
<dbReference type="OrthoDB" id="529454at2"/>
<dbReference type="Proteomes" id="UP000001420">
    <property type="component" value="Chromosome"/>
</dbReference>
<dbReference type="GO" id="GO:0031676">
    <property type="term" value="C:plasma membrane-derived thylakoid membrane"/>
    <property type="evidence" value="ECO:0007669"/>
    <property type="project" value="UniProtKB-SubCell"/>
</dbReference>
<dbReference type="GO" id="GO:0045158">
    <property type="term" value="F:electron transporter, transferring electrons within cytochrome b6/f complex of photosystem II activity"/>
    <property type="evidence" value="ECO:0007669"/>
    <property type="project" value="UniProtKB-UniRule"/>
</dbReference>
<dbReference type="GO" id="GO:0045156">
    <property type="term" value="F:electron transporter, transferring electrons within the cyclic electron transport pathway of photosynthesis activity"/>
    <property type="evidence" value="ECO:0007669"/>
    <property type="project" value="InterPro"/>
</dbReference>
<dbReference type="GO" id="GO:0008121">
    <property type="term" value="F:ubiquinol-cytochrome-c reductase activity"/>
    <property type="evidence" value="ECO:0007669"/>
    <property type="project" value="TreeGrafter"/>
</dbReference>
<dbReference type="GO" id="GO:0009767">
    <property type="term" value="P:photosynthetic electron transport chain"/>
    <property type="evidence" value="ECO:0007669"/>
    <property type="project" value="InterPro"/>
</dbReference>
<dbReference type="CDD" id="cd00290">
    <property type="entry name" value="cytochrome_b_C"/>
    <property type="match status" value="1"/>
</dbReference>
<dbReference type="FunFam" id="1.10.287.980:FF:000001">
    <property type="entry name" value="Cytochrome b6-f complex subunit 4"/>
    <property type="match status" value="1"/>
</dbReference>
<dbReference type="FunFam" id="1.20.5.510:FF:000002">
    <property type="entry name" value="Cytochrome b6-f complex subunit 4"/>
    <property type="match status" value="1"/>
</dbReference>
<dbReference type="Gene3D" id="1.10.287.980">
    <property type="entry name" value="plastocyanin oxidoreductase"/>
    <property type="match status" value="1"/>
</dbReference>
<dbReference type="Gene3D" id="1.20.5.510">
    <property type="entry name" value="Single helix bin"/>
    <property type="match status" value="1"/>
</dbReference>
<dbReference type="HAMAP" id="MF_01344">
    <property type="entry name" value="Cytb6_f_subIV"/>
    <property type="match status" value="1"/>
</dbReference>
<dbReference type="InterPro" id="IPR005798">
    <property type="entry name" value="Cyt_b/b6_C"/>
</dbReference>
<dbReference type="InterPro" id="IPR036150">
    <property type="entry name" value="Cyt_b/b6_C_sf"/>
</dbReference>
<dbReference type="InterPro" id="IPR005870">
    <property type="entry name" value="Cyt_b6/f_cplx_suIV"/>
</dbReference>
<dbReference type="InterPro" id="IPR048260">
    <property type="entry name" value="Cytochrome_b_C_euk/bac"/>
</dbReference>
<dbReference type="NCBIfam" id="TIGR01156">
    <property type="entry name" value="cytb6_f_IV"/>
    <property type="match status" value="1"/>
</dbReference>
<dbReference type="PANTHER" id="PTHR19271">
    <property type="entry name" value="CYTOCHROME B"/>
    <property type="match status" value="1"/>
</dbReference>
<dbReference type="PANTHER" id="PTHR19271:SF41">
    <property type="entry name" value="CYTOCHROME B_B6 C-TERMINAL REGION PROFILE DOMAIN-CONTAINING PROTEIN"/>
    <property type="match status" value="1"/>
</dbReference>
<dbReference type="Pfam" id="PF00032">
    <property type="entry name" value="Cytochrom_B_C"/>
    <property type="match status" value="1"/>
</dbReference>
<dbReference type="PIRSF" id="PIRSF000033">
    <property type="entry name" value="B6f_17K"/>
    <property type="match status" value="1"/>
</dbReference>
<dbReference type="SUPFAM" id="SSF81648">
    <property type="entry name" value="a domain/subunit of cytochrome bc1 complex (Ubiquinol-cytochrome c reductase)"/>
    <property type="match status" value="1"/>
</dbReference>
<dbReference type="PROSITE" id="PS51003">
    <property type="entry name" value="CYTB_CTER"/>
    <property type="match status" value="1"/>
</dbReference>
<keyword id="KW-0249">Electron transport</keyword>
<keyword id="KW-0472">Membrane</keyword>
<keyword id="KW-0602">Photosynthesis</keyword>
<keyword id="KW-1185">Reference proteome</keyword>
<keyword id="KW-0793">Thylakoid</keyword>
<keyword id="KW-0812">Transmembrane</keyword>
<keyword id="KW-1133">Transmembrane helix</keyword>
<keyword id="KW-0813">Transport</keyword>
<comment type="function">
    <text evidence="1">Component of the cytochrome b6-f complex, which mediates electron transfer between photosystem II (PSII) and photosystem I (PSI), cyclic electron flow around PSI, and state transitions.</text>
</comment>
<comment type="subunit">
    <text evidence="1">The 4 large subunits of the cytochrome b6-f complex are cytochrome b6, subunit IV (17 kDa polypeptide, PetD), cytochrome f and the Rieske protein, while the 4 small subunits are PetG, PetL, PetM and PetN. The complex functions as a dimer.</text>
</comment>
<comment type="subcellular location">
    <subcellularLocation>
        <location evidence="1">Cellular thylakoid membrane</location>
        <topology evidence="1">Multi-pass membrane protein</topology>
    </subcellularLocation>
</comment>
<comment type="similarity">
    <text evidence="1">Belongs to the cytochrome b family. PetD subfamily.</text>
</comment>
<name>PETD_PROMA</name>
<proteinExistence type="inferred from homology"/>
<evidence type="ECO:0000255" key="1">
    <source>
        <dbReference type="HAMAP-Rule" id="MF_01344"/>
    </source>
</evidence>
<reference key="1">
    <citation type="journal article" date="2003" name="Proc. Natl. Acad. Sci. U.S.A.">
        <title>Genome sequence of the cyanobacterium Prochlorococcus marinus SS120, a nearly minimal oxyphototrophic genome.</title>
        <authorList>
            <person name="Dufresne A."/>
            <person name="Salanoubat M."/>
            <person name="Partensky F."/>
            <person name="Artiguenave F."/>
            <person name="Axmann I.M."/>
            <person name="Barbe V."/>
            <person name="Duprat S."/>
            <person name="Galperin M.Y."/>
            <person name="Koonin E.V."/>
            <person name="Le Gall F."/>
            <person name="Makarova K.S."/>
            <person name="Ostrowski M."/>
            <person name="Oztas S."/>
            <person name="Robert C."/>
            <person name="Rogozin I.B."/>
            <person name="Scanlan D.J."/>
            <person name="Tandeau de Marsac N."/>
            <person name="Weissenbach J."/>
            <person name="Wincker P."/>
            <person name="Wolf Y.I."/>
            <person name="Hess W.R."/>
        </authorList>
    </citation>
    <scope>NUCLEOTIDE SEQUENCE [LARGE SCALE GENOMIC DNA]</scope>
    <source>
        <strain>SARG / CCMP1375 / SS120</strain>
    </source>
</reference>
<gene>
    <name evidence="1" type="primary">petD</name>
    <name type="ordered locus">Pro_0368</name>
</gene>
<feature type="chain" id="PRO_0000061904" description="Cytochrome b6-f complex subunit 4">
    <location>
        <begin position="1"/>
        <end position="160"/>
    </location>
</feature>
<feature type="transmembrane region" description="Helical" evidence="1">
    <location>
        <begin position="36"/>
        <end position="56"/>
    </location>
</feature>
<feature type="transmembrane region" description="Helical" evidence="1">
    <location>
        <begin position="95"/>
        <end position="115"/>
    </location>
</feature>
<feature type="transmembrane region" description="Helical" evidence="1">
    <location>
        <begin position="131"/>
        <end position="151"/>
    </location>
</feature>
<accession>Q7VDK8</accession>